<gene>
    <name type="primary">GOLGA6L1</name>
</gene>
<protein>
    <recommendedName>
        <fullName>Golgin subfamily A member 6-like protein 1</fullName>
    </recommendedName>
</protein>
<feature type="chain" id="PRO_0000326027" description="Golgin subfamily A member 6-like protein 1">
    <location>
        <begin position="1"/>
        <end position="668"/>
    </location>
</feature>
<feature type="region of interest" description="Disordered" evidence="2">
    <location>
        <begin position="1"/>
        <end position="120"/>
    </location>
</feature>
<feature type="region of interest" description="Disordered" evidence="2">
    <location>
        <begin position="323"/>
        <end position="356"/>
    </location>
</feature>
<feature type="region of interest" description="Disordered" evidence="2">
    <location>
        <begin position="384"/>
        <end position="466"/>
    </location>
</feature>
<feature type="region of interest" description="Disordered" evidence="2">
    <location>
        <begin position="481"/>
        <end position="591"/>
    </location>
</feature>
<feature type="region of interest" description="Disordered" evidence="2">
    <location>
        <begin position="603"/>
        <end position="639"/>
    </location>
</feature>
<feature type="coiled-coil region" evidence="1">
    <location>
        <begin position="177"/>
        <end position="663"/>
    </location>
</feature>
<feature type="compositionally biased region" description="Basic residues" evidence="2">
    <location>
        <begin position="15"/>
        <end position="41"/>
    </location>
</feature>
<feature type="compositionally biased region" description="Basic and acidic residues" evidence="2">
    <location>
        <begin position="51"/>
        <end position="72"/>
    </location>
</feature>
<feature type="compositionally biased region" description="Polar residues" evidence="2">
    <location>
        <begin position="73"/>
        <end position="83"/>
    </location>
</feature>
<feature type="compositionally biased region" description="Polar residues" evidence="2">
    <location>
        <begin position="91"/>
        <end position="103"/>
    </location>
</feature>
<feature type="compositionally biased region" description="Basic and acidic residues" evidence="2">
    <location>
        <begin position="106"/>
        <end position="120"/>
    </location>
</feature>
<feature type="sequence conflict" description="In Ref. 1; AK097517." evidence="3" ref="1">
    <original>R</original>
    <variation>W</variation>
    <location>
        <position position="491"/>
    </location>
</feature>
<dbReference type="EMBL" id="AK097517">
    <property type="status" value="NOT_ANNOTATED_CDS"/>
    <property type="molecule type" value="mRNA"/>
</dbReference>
<dbReference type="EMBL" id="AC116165">
    <property type="status" value="NOT_ANNOTATED_CDS"/>
    <property type="molecule type" value="Genomic_DNA"/>
</dbReference>
<dbReference type="CCDS" id="CCDS73699.1"/>
<dbReference type="RefSeq" id="NP_001001413.3">
    <property type="nucleotide sequence ID" value="NM_001001413.3"/>
</dbReference>
<dbReference type="SMR" id="Q8N7Z2"/>
<dbReference type="STRING" id="9606.ENSP00000478478"/>
<dbReference type="GlyGen" id="Q8N7Z2">
    <property type="glycosylation" value="1 site, 1 O-linked glycan (1 site)"/>
</dbReference>
<dbReference type="iPTMnet" id="Q8N7Z2"/>
<dbReference type="PhosphoSitePlus" id="Q8N7Z2"/>
<dbReference type="BioMuta" id="GOLGA6L1"/>
<dbReference type="DMDM" id="300669642"/>
<dbReference type="MassIVE" id="Q8N7Z2"/>
<dbReference type="PaxDb" id="9606-ENSP00000478478"/>
<dbReference type="PeptideAtlas" id="Q8N7Z2"/>
<dbReference type="Antibodypedia" id="74192">
    <property type="antibodies" value="13 antibodies from 4 providers"/>
</dbReference>
<dbReference type="Ensembl" id="ENST00000611085.2">
    <property type="protein sequence ID" value="ENSP00000482864.1"/>
    <property type="gene ID" value="ENSG00000278247.2"/>
</dbReference>
<dbReference type="Ensembl" id="ENST00000614055.2">
    <property type="protein sequence ID" value="ENSP00000478478.1"/>
    <property type="gene ID" value="ENSG00000273976.2"/>
</dbReference>
<dbReference type="Ensembl" id="ENST00000616813.2">
    <property type="protein sequence ID" value="ENSP00000483916.1"/>
    <property type="gene ID" value="ENSG00000275009.2"/>
</dbReference>
<dbReference type="GeneID" id="283767"/>
<dbReference type="KEGG" id="hsa:283767"/>
<dbReference type="MANE-Select" id="ENST00000614055.2">
    <property type="protein sequence ID" value="ENSP00000478478.1"/>
    <property type="RefSeq nucleotide sequence ID" value="NM_001001413.3"/>
    <property type="RefSeq protein sequence ID" value="NP_001001413.3"/>
</dbReference>
<dbReference type="UCSC" id="uc032bvr.2">
    <property type="organism name" value="human"/>
</dbReference>
<dbReference type="AGR" id="HGNC:37444"/>
<dbReference type="CTD" id="283767"/>
<dbReference type="GeneCards" id="GOLGA6L1"/>
<dbReference type="HGNC" id="HGNC:37444">
    <property type="gene designation" value="GOLGA6L1"/>
</dbReference>
<dbReference type="HPA" id="ENSG00000273976">
    <property type="expression patterns" value="Tissue enriched (testis)"/>
</dbReference>
<dbReference type="neXtProt" id="NX_Q8N7Z2"/>
<dbReference type="OpenTargets" id="ENSG00000273976"/>
<dbReference type="VEuPathDB" id="HostDB:ENSG00000273976"/>
<dbReference type="eggNOG" id="KOG4725">
    <property type="taxonomic scope" value="Eukaryota"/>
</dbReference>
<dbReference type="GeneTree" id="ENSGT00940000163338"/>
<dbReference type="InParanoid" id="Q8N7Z2"/>
<dbReference type="OMA" id="QEENLWE"/>
<dbReference type="OrthoDB" id="9540182at2759"/>
<dbReference type="PAN-GO" id="Q8N7Z2">
    <property type="GO annotations" value="0 GO annotations based on evolutionary models"/>
</dbReference>
<dbReference type="PhylomeDB" id="Q8N7Z2"/>
<dbReference type="PathwayCommons" id="Q8N7Z2"/>
<dbReference type="BioGRID-ORCS" id="283767">
    <property type="hits" value="262 hits in 663 CRISPR screens"/>
</dbReference>
<dbReference type="ChiTaRS" id="GOLGA6L1">
    <property type="organism name" value="human"/>
</dbReference>
<dbReference type="GenomeRNAi" id="283767"/>
<dbReference type="Pharos" id="Q8N7Z2">
    <property type="development level" value="Tdark"/>
</dbReference>
<dbReference type="PRO" id="PR:Q8N7Z2"/>
<dbReference type="Proteomes" id="UP000005640">
    <property type="component" value="Chromosome 15"/>
</dbReference>
<dbReference type="RNAct" id="Q8N7Z2">
    <property type="molecule type" value="protein"/>
</dbReference>
<dbReference type="Bgee" id="ENSG00000273976">
    <property type="expression patterns" value="Expressed in male germ line stem cell (sensu Vertebrata) in testis and 18 other cell types or tissues"/>
</dbReference>
<dbReference type="InterPro" id="IPR026737">
    <property type="entry name" value="GOLGA6L"/>
</dbReference>
<dbReference type="PANTHER" id="PTHR23143:SF31">
    <property type="entry name" value="GOLGIN SUBFAMILY A MEMBER 6-LIKE PROTEIN 1-RELATED"/>
    <property type="match status" value="1"/>
</dbReference>
<dbReference type="PANTHER" id="PTHR23143">
    <property type="entry name" value="TRICHOHYALIN-RELATED"/>
    <property type="match status" value="1"/>
</dbReference>
<name>GG6L1_HUMAN</name>
<accession>Q8N7Z2</accession>
<accession>A0A087WU96</accession>
<organism>
    <name type="scientific">Homo sapiens</name>
    <name type="common">Human</name>
    <dbReference type="NCBI Taxonomy" id="9606"/>
    <lineage>
        <taxon>Eukaryota</taxon>
        <taxon>Metazoa</taxon>
        <taxon>Chordata</taxon>
        <taxon>Craniata</taxon>
        <taxon>Vertebrata</taxon>
        <taxon>Euteleostomi</taxon>
        <taxon>Mammalia</taxon>
        <taxon>Eutheria</taxon>
        <taxon>Euarchontoglires</taxon>
        <taxon>Primates</taxon>
        <taxon>Haplorrhini</taxon>
        <taxon>Catarrhini</taxon>
        <taxon>Hominidae</taxon>
        <taxon>Homo</taxon>
    </lineage>
</organism>
<proteinExistence type="evidence at transcript level"/>
<keyword id="KW-0175">Coiled coil</keyword>
<keyword id="KW-1185">Reference proteome</keyword>
<sequence length="668" mass="83069">MLMWPQPHLPTHPHLPTHPHLPTHPHLPTHPHLPTHPHLPTHPHLPTHPMMSKETRQSKLAEAKEQLTDHHPQTNPSVGTAASDTKKKKINNGTNPETTTSGGCHSPEDEQKASHQHQEALRRELEAQVHTIRILTCQKTELQMALYYSQHAVKQLEGEARDLISRLHDSWKFAGELEQALSAVATQKKKADRYIEELTKERDALSLELYRNTITDEELKEKNAKLQEKLQLVESEKSEIQLNVKELKRKLERAKLLLPQQQLQAEADHLGKELQSVSAKLQAQVEENELWNRLNQQQEEKMWRQEEKIQEWEEKIQEQEEKIREQEEKIREQEEKMRRQEEMMWEKEEKMRRQEEMMWEKEEKMRRLEEMMWEKEEKIRELEEKMHEQEKIREQEEKRQEEEKIREQEKRQEQEAKMWRQEEKIREQEEKIREQEKKMWRQEEKIHEQEKIREEEKRQEQEEMWRQEEKIREQEEIWRQKEKMHEQEKIRKQEEKVWRQEEKMHDQEEKIREQEEKMWRQEEKIREQEEKIREQEEKIREQEEMMQEQEEKMGEQEEKMQEQEKMRRQEEKIREQEEKIREQKEKIREQEEKIWEQEEKIREQEEMMQEQEEKMWEQEEKMCEQEEKMQEQEEKMRRQEEKMWEQEVRLRQQEEKMQEHQEHLEAAI</sequence>
<reference key="1">
    <citation type="journal article" date="2004" name="Nat. Genet.">
        <title>Complete sequencing and characterization of 21,243 full-length human cDNAs.</title>
        <authorList>
            <person name="Ota T."/>
            <person name="Suzuki Y."/>
            <person name="Nishikawa T."/>
            <person name="Otsuki T."/>
            <person name="Sugiyama T."/>
            <person name="Irie R."/>
            <person name="Wakamatsu A."/>
            <person name="Hayashi K."/>
            <person name="Sato H."/>
            <person name="Nagai K."/>
            <person name="Kimura K."/>
            <person name="Makita H."/>
            <person name="Sekine M."/>
            <person name="Obayashi M."/>
            <person name="Nishi T."/>
            <person name="Shibahara T."/>
            <person name="Tanaka T."/>
            <person name="Ishii S."/>
            <person name="Yamamoto J."/>
            <person name="Saito K."/>
            <person name="Kawai Y."/>
            <person name="Isono Y."/>
            <person name="Nakamura Y."/>
            <person name="Nagahari K."/>
            <person name="Murakami K."/>
            <person name="Yasuda T."/>
            <person name="Iwayanagi T."/>
            <person name="Wagatsuma M."/>
            <person name="Shiratori A."/>
            <person name="Sudo H."/>
            <person name="Hosoiri T."/>
            <person name="Kaku Y."/>
            <person name="Kodaira H."/>
            <person name="Kondo H."/>
            <person name="Sugawara M."/>
            <person name="Takahashi M."/>
            <person name="Kanda K."/>
            <person name="Yokoi T."/>
            <person name="Furuya T."/>
            <person name="Kikkawa E."/>
            <person name="Omura Y."/>
            <person name="Abe K."/>
            <person name="Kamihara K."/>
            <person name="Katsuta N."/>
            <person name="Sato K."/>
            <person name="Tanikawa M."/>
            <person name="Yamazaki M."/>
            <person name="Ninomiya K."/>
            <person name="Ishibashi T."/>
            <person name="Yamashita H."/>
            <person name="Murakawa K."/>
            <person name="Fujimori K."/>
            <person name="Tanai H."/>
            <person name="Kimata M."/>
            <person name="Watanabe M."/>
            <person name="Hiraoka S."/>
            <person name="Chiba Y."/>
            <person name="Ishida S."/>
            <person name="Ono Y."/>
            <person name="Takiguchi S."/>
            <person name="Watanabe S."/>
            <person name="Yosida M."/>
            <person name="Hotuta T."/>
            <person name="Kusano J."/>
            <person name="Kanehori K."/>
            <person name="Takahashi-Fujii A."/>
            <person name="Hara H."/>
            <person name="Tanase T.-O."/>
            <person name="Nomura Y."/>
            <person name="Togiya S."/>
            <person name="Komai F."/>
            <person name="Hara R."/>
            <person name="Takeuchi K."/>
            <person name="Arita M."/>
            <person name="Imose N."/>
            <person name="Musashino K."/>
            <person name="Yuuki H."/>
            <person name="Oshima A."/>
            <person name="Sasaki N."/>
            <person name="Aotsuka S."/>
            <person name="Yoshikawa Y."/>
            <person name="Matsunawa H."/>
            <person name="Ichihara T."/>
            <person name="Shiohata N."/>
            <person name="Sano S."/>
            <person name="Moriya S."/>
            <person name="Momiyama H."/>
            <person name="Satoh N."/>
            <person name="Takami S."/>
            <person name="Terashima Y."/>
            <person name="Suzuki O."/>
            <person name="Nakagawa S."/>
            <person name="Senoh A."/>
            <person name="Mizoguchi H."/>
            <person name="Goto Y."/>
            <person name="Shimizu F."/>
            <person name="Wakebe H."/>
            <person name="Hishigaki H."/>
            <person name="Watanabe T."/>
            <person name="Sugiyama A."/>
            <person name="Takemoto M."/>
            <person name="Kawakami B."/>
            <person name="Yamazaki M."/>
            <person name="Watanabe K."/>
            <person name="Kumagai A."/>
            <person name="Itakura S."/>
            <person name="Fukuzumi Y."/>
            <person name="Fujimori Y."/>
            <person name="Komiyama M."/>
            <person name="Tashiro H."/>
            <person name="Tanigami A."/>
            <person name="Fujiwara T."/>
            <person name="Ono T."/>
            <person name="Yamada K."/>
            <person name="Fujii Y."/>
            <person name="Ozaki K."/>
            <person name="Hirao M."/>
            <person name="Ohmori Y."/>
            <person name="Kawabata A."/>
            <person name="Hikiji T."/>
            <person name="Kobatake N."/>
            <person name="Inagaki H."/>
            <person name="Ikema Y."/>
            <person name="Okamoto S."/>
            <person name="Okitani R."/>
            <person name="Kawakami T."/>
            <person name="Noguchi S."/>
            <person name="Itoh T."/>
            <person name="Shigeta K."/>
            <person name="Senba T."/>
            <person name="Matsumura K."/>
            <person name="Nakajima Y."/>
            <person name="Mizuno T."/>
            <person name="Morinaga M."/>
            <person name="Sasaki M."/>
            <person name="Togashi T."/>
            <person name="Oyama M."/>
            <person name="Hata H."/>
            <person name="Watanabe M."/>
            <person name="Komatsu T."/>
            <person name="Mizushima-Sugano J."/>
            <person name="Satoh T."/>
            <person name="Shirai Y."/>
            <person name="Takahashi Y."/>
            <person name="Nakagawa K."/>
            <person name="Okumura K."/>
            <person name="Nagase T."/>
            <person name="Nomura N."/>
            <person name="Kikuchi H."/>
            <person name="Masuho Y."/>
            <person name="Yamashita R."/>
            <person name="Nakai K."/>
            <person name="Yada T."/>
            <person name="Nakamura Y."/>
            <person name="Ohara O."/>
            <person name="Isogai T."/>
            <person name="Sugano S."/>
        </authorList>
    </citation>
    <scope>NUCLEOTIDE SEQUENCE [LARGE SCALE MRNA]</scope>
    <source>
        <tissue>Testis</tissue>
    </source>
</reference>
<reference key="2">
    <citation type="journal article" date="2006" name="Nature">
        <title>Analysis of the DNA sequence and duplication history of human chromosome 15.</title>
        <authorList>
            <person name="Zody M.C."/>
            <person name="Garber M."/>
            <person name="Sharpe T."/>
            <person name="Young S.K."/>
            <person name="Rowen L."/>
            <person name="O'Neill K."/>
            <person name="Whittaker C.A."/>
            <person name="Kamal M."/>
            <person name="Chang J.L."/>
            <person name="Cuomo C.A."/>
            <person name="Dewar K."/>
            <person name="FitzGerald M.G."/>
            <person name="Kodira C.D."/>
            <person name="Madan A."/>
            <person name="Qin S."/>
            <person name="Yang X."/>
            <person name="Abbasi N."/>
            <person name="Abouelleil A."/>
            <person name="Arachchi H.M."/>
            <person name="Baradarani L."/>
            <person name="Birditt B."/>
            <person name="Bloom S."/>
            <person name="Bloom T."/>
            <person name="Borowsky M.L."/>
            <person name="Burke J."/>
            <person name="Butler J."/>
            <person name="Cook A."/>
            <person name="DeArellano K."/>
            <person name="DeCaprio D."/>
            <person name="Dorris L. III"/>
            <person name="Dors M."/>
            <person name="Eichler E.E."/>
            <person name="Engels R."/>
            <person name="Fahey J."/>
            <person name="Fleetwood P."/>
            <person name="Friedman C."/>
            <person name="Gearin G."/>
            <person name="Hall J.L."/>
            <person name="Hensley G."/>
            <person name="Johnson E."/>
            <person name="Jones C."/>
            <person name="Kamat A."/>
            <person name="Kaur A."/>
            <person name="Locke D.P."/>
            <person name="Madan A."/>
            <person name="Munson G."/>
            <person name="Jaffe D.B."/>
            <person name="Lui A."/>
            <person name="Macdonald P."/>
            <person name="Mauceli E."/>
            <person name="Naylor J.W."/>
            <person name="Nesbitt R."/>
            <person name="Nicol R."/>
            <person name="O'Leary S.B."/>
            <person name="Ratcliffe A."/>
            <person name="Rounsley S."/>
            <person name="She X."/>
            <person name="Sneddon K.M.B."/>
            <person name="Stewart S."/>
            <person name="Sougnez C."/>
            <person name="Stone S.M."/>
            <person name="Topham K."/>
            <person name="Vincent D."/>
            <person name="Wang S."/>
            <person name="Zimmer A.R."/>
            <person name="Birren B.W."/>
            <person name="Hood L."/>
            <person name="Lander E.S."/>
            <person name="Nusbaum C."/>
        </authorList>
    </citation>
    <scope>NUCLEOTIDE SEQUENCE [LARGE SCALE GENOMIC DNA]</scope>
</reference>
<evidence type="ECO:0000255" key="1"/>
<evidence type="ECO:0000256" key="2">
    <source>
        <dbReference type="SAM" id="MobiDB-lite"/>
    </source>
</evidence>
<evidence type="ECO:0000305" key="3"/>
<comment type="similarity">
    <text evidence="3">Belongs to the GOLGA6 family.</text>
</comment>